<dbReference type="SMR" id="C0HJR2"/>
<dbReference type="GO" id="GO:0005576">
    <property type="term" value="C:extracellular region"/>
    <property type="evidence" value="ECO:0007669"/>
    <property type="project" value="UniProtKB-SubCell"/>
</dbReference>
<dbReference type="GO" id="GO:0099106">
    <property type="term" value="F:ion channel regulator activity"/>
    <property type="evidence" value="ECO:0007669"/>
    <property type="project" value="UniProtKB-KW"/>
</dbReference>
<dbReference type="GO" id="GO:0090729">
    <property type="term" value="F:toxin activity"/>
    <property type="evidence" value="ECO:0007669"/>
    <property type="project" value="UniProtKB-KW"/>
</dbReference>
<dbReference type="CDD" id="cd00206">
    <property type="entry name" value="TFP_snake_toxin"/>
    <property type="match status" value="1"/>
</dbReference>
<dbReference type="FunFam" id="2.10.60.10:FF:000024">
    <property type="entry name" value="Cytotoxin 1"/>
    <property type="match status" value="1"/>
</dbReference>
<dbReference type="Gene3D" id="2.10.60.10">
    <property type="entry name" value="CD59"/>
    <property type="match status" value="1"/>
</dbReference>
<dbReference type="InterPro" id="IPR003571">
    <property type="entry name" value="Snake_3FTx"/>
</dbReference>
<dbReference type="InterPro" id="IPR045860">
    <property type="entry name" value="Snake_toxin-like_sf"/>
</dbReference>
<dbReference type="InterPro" id="IPR054131">
    <property type="entry name" value="Toxin_cobra-type"/>
</dbReference>
<dbReference type="Pfam" id="PF21947">
    <property type="entry name" value="Toxin_cobra-type"/>
    <property type="match status" value="1"/>
</dbReference>
<dbReference type="SUPFAM" id="SSF57302">
    <property type="entry name" value="Snake toxin-like"/>
    <property type="match status" value="1"/>
</dbReference>
<evidence type="ECO:0000250" key="1">
    <source>
        <dbReference type="UniProtKB" id="P81783"/>
    </source>
</evidence>
<evidence type="ECO:0000269" key="2">
    <source>
    </source>
</evidence>
<evidence type="ECO:0000303" key="3">
    <source>
    </source>
</evidence>
<evidence type="ECO:0000305" key="4"/>
<evidence type="ECO:0000305" key="5">
    <source>
    </source>
</evidence>
<comment type="function">
    <text evidence="2">Allosteric modulator of the GABA(A) receptor (GABR), possibly increasing receptor affinity for the agonist, thus enhancing receptor opening and macroscopic desensitization. In vivo, intracerebroventricular injection into mice results in periods of reduced basal activity, followed by bursts of intense seizures and death.</text>
</comment>
<comment type="subcellular location">
    <subcellularLocation>
        <location evidence="2">Secreted</location>
    </subcellularLocation>
</comment>
<comment type="tissue specificity">
    <text evidence="5">Expressed by the venom gland.</text>
</comment>
<comment type="mass spectrometry"/>
<comment type="toxic dose">
    <text evidence="2">LD(50) is 0.01 mg/kg by intracerebroventricular injection in mice.</text>
</comment>
<comment type="miscellaneous">
    <text evidence="2">Negative results: does not bind to nicotinic acetylcholine receptors (nAChR), muscarinic acetylcholine receptors (mAChR), acetylcholinesterase (AChE) or to receptors for glycine and glutamate.</text>
</comment>
<comment type="similarity">
    <text evidence="4">Belongs to the three-finger toxin family. Ancestral subfamily.</text>
</comment>
<reference key="1">
    <citation type="journal article" date="2015" name="Proc. Natl. Acad. Sci. U.S.A.">
        <title>MmTX1 and MmTX2 from coral snake venom potently modulate GABAA receptor activity.</title>
        <authorList>
            <person name="Rosso J.P."/>
            <person name="Schwarz J.R."/>
            <person name="Diaz-Bustamante M."/>
            <person name="Ceard B."/>
            <person name="Gutierrez J.M."/>
            <person name="Kneussel M."/>
            <person name="Pongs O."/>
            <person name="Bosmans F."/>
            <person name="Bougis P.E."/>
        </authorList>
    </citation>
    <scope>PROTEIN SEQUENCE</scope>
    <scope>FUNCTION</scope>
    <scope>SUBCELLULAR LOCATION</scope>
    <scope>MASS SPECTROMETRY</scope>
    <scope>TOXIC DOSE</scope>
    <scope>MUTAGENESIS OF HIS-33</scope>
    <source>
        <tissue>Venom</tissue>
    </source>
</reference>
<name>3NX2_MICMP</name>
<organism>
    <name type="scientific">Micrurus mipartitus</name>
    <name type="common">Red-tailed coral snake</name>
    <dbReference type="NCBI Taxonomy" id="430902"/>
    <lineage>
        <taxon>Eukaryota</taxon>
        <taxon>Metazoa</taxon>
        <taxon>Chordata</taxon>
        <taxon>Craniata</taxon>
        <taxon>Vertebrata</taxon>
        <taxon>Euteleostomi</taxon>
        <taxon>Lepidosauria</taxon>
        <taxon>Squamata</taxon>
        <taxon>Bifurcata</taxon>
        <taxon>Unidentata</taxon>
        <taxon>Episquamata</taxon>
        <taxon>Toxicofera</taxon>
        <taxon>Serpentes</taxon>
        <taxon>Colubroidea</taxon>
        <taxon>Elapidae</taxon>
        <taxon>Elapinae</taxon>
        <taxon>Micrurus</taxon>
    </lineage>
</organism>
<protein>
    <recommendedName>
        <fullName evidence="3">Micrurotoxin 2</fullName>
        <shortName evidence="3">MmTX2</shortName>
    </recommendedName>
</protein>
<proteinExistence type="evidence at protein level"/>
<keyword id="KW-1265">Chloride channel impairing toxin</keyword>
<keyword id="KW-0903">Direct protein sequencing</keyword>
<keyword id="KW-1015">Disulfide bond</keyword>
<keyword id="KW-0872">Ion channel impairing toxin</keyword>
<keyword id="KW-0528">Neurotoxin</keyword>
<keyword id="KW-0964">Secreted</keyword>
<keyword id="KW-0800">Toxin</keyword>
<feature type="chain" id="PRO_0000432831" description="Micrurotoxin 2" evidence="2">
    <location>
        <begin position="1"/>
        <end position="64"/>
    </location>
</feature>
<feature type="disulfide bond" evidence="1">
    <location>
        <begin position="3"/>
        <end position="24"/>
    </location>
</feature>
<feature type="disulfide bond" evidence="1">
    <location>
        <begin position="6"/>
        <end position="11"/>
    </location>
</feature>
<feature type="disulfide bond" evidence="1">
    <location>
        <begin position="17"/>
        <end position="41"/>
    </location>
</feature>
<feature type="disulfide bond" evidence="1">
    <location>
        <begin position="45"/>
        <end position="57"/>
    </location>
</feature>
<feature type="disulfide bond" evidence="1">
    <location>
        <begin position="58"/>
        <end position="63"/>
    </location>
</feature>
<feature type="mutagenesis site" description="Loss of activity." evidence="2">
    <original>H</original>
    <variation>S</variation>
    <location>
        <position position="33"/>
    </location>
</feature>
<sequence>LTCKTCPFTTCPNSESCPGGQSICYQRKWEEHHGERIERRCVANCPAFGSHDTSLLCCTRDNCN</sequence>
<accession>C0HJR2</accession>